<gene>
    <name evidence="6" type="primary">bckd-1A</name>
    <name evidence="6" type="ORF">Y39E4A.3</name>
</gene>
<feature type="transit peptide" description="Mitochondrion" evidence="3">
    <location>
        <begin position="1"/>
        <end status="unknown"/>
    </location>
</feature>
<feature type="chain" id="PRO_0000421270" description="2-oxoisovalerate dehydrogenase subunit alpha, mitochondrial">
    <location>
        <begin status="unknown"/>
        <end position="431"/>
    </location>
</feature>
<feature type="binding site" evidence="2">
    <location>
        <begin position="140"/>
        <end position="142"/>
    </location>
    <ligand>
        <name>thiamine diphosphate</name>
        <dbReference type="ChEBI" id="CHEBI:58937"/>
    </ligand>
</feature>
<feature type="binding site" evidence="2">
    <location>
        <position position="189"/>
    </location>
    <ligand>
        <name>K(+)</name>
        <dbReference type="ChEBI" id="CHEBI:29103"/>
    </ligand>
</feature>
<feature type="binding site" evidence="2">
    <location>
        <position position="194"/>
    </location>
    <ligand>
        <name>K(+)</name>
        <dbReference type="ChEBI" id="CHEBI:29103"/>
    </ligand>
</feature>
<feature type="binding site" evidence="2">
    <location>
        <position position="195"/>
    </location>
    <ligand>
        <name>K(+)</name>
        <dbReference type="ChEBI" id="CHEBI:29103"/>
    </ligand>
</feature>
<sequence>MHRALLNASRRVATVRSMASTVEGDAFRLSEYSSKYLGHRKAAFTEKLEIVNADDTPALPIYRVTNAVGDVIDKSQDPNFDEQTSLKMYKTMTQLNIMDRILYDSQRQGRISFYMTSFGEEGNHVGSAAALEPQDLIYGQYREAGVLLWRGYTMENFMNQCYGNADDLGKGRQMPMHFGTKERNFVTISSPLTTQLPQAVGSAYAFKQQKDNNRIAVVYFGDGAASEGDAHAAFNFAATLKCPIIFFCRNNGYAISTPTSEQYGGDGIAGKGPAYGLHTIRVDGNDLLAVYNATKEARRVALTNRPVLIEAMTYRLGHHSTSDDSTAYRSSDEVQTWGDKDHPITRFKKYITERGWWNEEKEMEWQKEVKKRVLTEFAAAEKRKKAHYHDLFEDVYDELPLRLRRQRDELDAHVAEYKEHYPMLETLQSKP</sequence>
<keyword id="KW-0275">Fatty acid biosynthesis</keyword>
<keyword id="KW-0276">Fatty acid metabolism</keyword>
<keyword id="KW-0444">Lipid biosynthesis</keyword>
<keyword id="KW-0443">Lipid metabolism</keyword>
<keyword id="KW-0479">Metal-binding</keyword>
<keyword id="KW-0496">Mitochondrion</keyword>
<keyword id="KW-0560">Oxidoreductase</keyword>
<keyword id="KW-0597">Phosphoprotein</keyword>
<keyword id="KW-0630">Potassium</keyword>
<keyword id="KW-1185">Reference proteome</keyword>
<keyword id="KW-0809">Transit peptide</keyword>
<organism>
    <name type="scientific">Caenorhabditis elegans</name>
    <dbReference type="NCBI Taxonomy" id="6239"/>
    <lineage>
        <taxon>Eukaryota</taxon>
        <taxon>Metazoa</taxon>
        <taxon>Ecdysozoa</taxon>
        <taxon>Nematoda</taxon>
        <taxon>Chromadorea</taxon>
        <taxon>Rhabditida</taxon>
        <taxon>Rhabditina</taxon>
        <taxon>Rhabditomorpha</taxon>
        <taxon>Rhabditoidea</taxon>
        <taxon>Rhabditidae</taxon>
        <taxon>Peloderinae</taxon>
        <taxon>Caenorhabditis</taxon>
    </lineage>
</organism>
<evidence type="ECO:0000250" key="1">
    <source>
        <dbReference type="UniProtKB" id="P11178"/>
    </source>
</evidence>
<evidence type="ECO:0000250" key="2">
    <source>
        <dbReference type="UniProtKB" id="P12694"/>
    </source>
</evidence>
<evidence type="ECO:0000255" key="3"/>
<evidence type="ECO:0000269" key="4">
    <source>
    </source>
</evidence>
<evidence type="ECO:0000305" key="5"/>
<evidence type="ECO:0000312" key="6">
    <source>
        <dbReference type="WormBase" id="Y39E4A.3a"/>
    </source>
</evidence>
<dbReference type="EC" id="1.2.4.4" evidence="4"/>
<dbReference type="EMBL" id="AL021480">
    <property type="protein sequence ID" value="CAA16329.2"/>
    <property type="molecule type" value="Genomic_DNA"/>
</dbReference>
<dbReference type="PIR" id="T26758">
    <property type="entry name" value="T26758"/>
</dbReference>
<dbReference type="RefSeq" id="NP_001033376.1">
    <property type="nucleotide sequence ID" value="NM_001038287.6"/>
</dbReference>
<dbReference type="SMR" id="O45924"/>
<dbReference type="BioGRID" id="41889">
    <property type="interactions" value="8"/>
</dbReference>
<dbReference type="DIP" id="DIP-25302N"/>
<dbReference type="FunCoup" id="O45924">
    <property type="interactions" value="1589"/>
</dbReference>
<dbReference type="IntAct" id="O45924">
    <property type="interactions" value="1"/>
</dbReference>
<dbReference type="STRING" id="6239.Y39E4A.3b.1"/>
<dbReference type="SwissLipids" id="SLP:000000190"/>
<dbReference type="PaxDb" id="6239-Y39E4A.3b"/>
<dbReference type="PeptideAtlas" id="O45924"/>
<dbReference type="EnsemblMetazoa" id="Y39E4A.3a.1">
    <property type="protein sequence ID" value="Y39E4A.3a.1"/>
    <property type="gene ID" value="WBGene00012713"/>
</dbReference>
<dbReference type="EnsemblMetazoa" id="Y39E4A.3a.2">
    <property type="protein sequence ID" value="Y39E4A.3a.2"/>
    <property type="gene ID" value="WBGene00012713"/>
</dbReference>
<dbReference type="GeneID" id="176716"/>
<dbReference type="KEGG" id="cel:CELE_Y39E4A.3"/>
<dbReference type="UCSC" id="Y39E4A.3b">
    <property type="organism name" value="c. elegans"/>
</dbReference>
<dbReference type="AGR" id="WB:WBGene00012713"/>
<dbReference type="CTD" id="176716"/>
<dbReference type="WormBase" id="Y39E4A.3a">
    <property type="protein sequence ID" value="CE33866"/>
    <property type="gene ID" value="WBGene00012713"/>
    <property type="gene designation" value="bckd-1A"/>
</dbReference>
<dbReference type="eggNOG" id="KOG1182">
    <property type="taxonomic scope" value="Eukaryota"/>
</dbReference>
<dbReference type="HOGENOM" id="CLU_029393_1_2_1"/>
<dbReference type="InParanoid" id="O45924"/>
<dbReference type="OMA" id="GMFRGVN"/>
<dbReference type="OrthoDB" id="3845at2759"/>
<dbReference type="Reactome" id="R-CEL-9859138">
    <property type="pathway name" value="BCKDH synthesizes BCAA-CoA from KIC, KMVA, KIV"/>
</dbReference>
<dbReference type="UniPathway" id="UPA00094"/>
<dbReference type="PRO" id="PR:O45924"/>
<dbReference type="Proteomes" id="UP000001940">
    <property type="component" value="Chromosome III"/>
</dbReference>
<dbReference type="Bgee" id="WBGene00012713">
    <property type="expression patterns" value="Expressed in germ line (C elegans) and 4 other cell types or tissues"/>
</dbReference>
<dbReference type="ExpressionAtlas" id="O45924">
    <property type="expression patterns" value="baseline and differential"/>
</dbReference>
<dbReference type="GO" id="GO:0005759">
    <property type="term" value="C:mitochondrial matrix"/>
    <property type="evidence" value="ECO:0007669"/>
    <property type="project" value="UniProtKB-SubCell"/>
</dbReference>
<dbReference type="GO" id="GO:0003863">
    <property type="term" value="F:3-methyl-2-oxobutanoate dehydrogenase (2-methylpropanoyl-transferring) activity"/>
    <property type="evidence" value="ECO:0007669"/>
    <property type="project" value="UniProtKB-EC"/>
</dbReference>
<dbReference type="GO" id="GO:0046872">
    <property type="term" value="F:metal ion binding"/>
    <property type="evidence" value="ECO:0007669"/>
    <property type="project" value="UniProtKB-KW"/>
</dbReference>
<dbReference type="GO" id="GO:0009083">
    <property type="term" value="P:branched-chain amino acid catabolic process"/>
    <property type="evidence" value="ECO:0000318"/>
    <property type="project" value="GO_Central"/>
</dbReference>
<dbReference type="GO" id="GO:0006633">
    <property type="term" value="P:fatty acid biosynthetic process"/>
    <property type="evidence" value="ECO:0007669"/>
    <property type="project" value="UniProtKB-UniPathway"/>
</dbReference>
<dbReference type="CDD" id="cd02000">
    <property type="entry name" value="TPP_E1_PDC_ADC_BCADC"/>
    <property type="match status" value="1"/>
</dbReference>
<dbReference type="FunFam" id="3.40.50.970:FF:000015">
    <property type="entry name" value="2-oxoisovalerate dehydrogenase subunit alpha"/>
    <property type="match status" value="1"/>
</dbReference>
<dbReference type="Gene3D" id="3.40.50.970">
    <property type="match status" value="1"/>
</dbReference>
<dbReference type="InterPro" id="IPR050771">
    <property type="entry name" value="Alpha-ketoacid_DH_E1_comp"/>
</dbReference>
<dbReference type="InterPro" id="IPR001017">
    <property type="entry name" value="DH_E1"/>
</dbReference>
<dbReference type="InterPro" id="IPR029061">
    <property type="entry name" value="THDP-binding"/>
</dbReference>
<dbReference type="PANTHER" id="PTHR43380">
    <property type="entry name" value="2-OXOISOVALERATE DEHYDROGENASE SUBUNIT ALPHA, MITOCHONDRIAL"/>
    <property type="match status" value="1"/>
</dbReference>
<dbReference type="PANTHER" id="PTHR43380:SF1">
    <property type="entry name" value="2-OXOISOVALERATE DEHYDROGENASE SUBUNIT ALPHA, MITOCHONDRIAL"/>
    <property type="match status" value="1"/>
</dbReference>
<dbReference type="Pfam" id="PF00676">
    <property type="entry name" value="E1_dh"/>
    <property type="match status" value="1"/>
</dbReference>
<dbReference type="SUPFAM" id="SSF52518">
    <property type="entry name" value="Thiamin diphosphate-binding fold (THDP-binding)"/>
    <property type="match status" value="1"/>
</dbReference>
<protein>
    <recommendedName>
        <fullName>2-oxoisovalerate dehydrogenase subunit alpha, mitochondrial</fullName>
        <ecNumber evidence="4">1.2.4.4</ecNumber>
    </recommendedName>
    <alternativeName>
        <fullName>Branched-chain alpha-keto acid dehydrogenase E1 component alpha chain</fullName>
    </alternativeName>
</protein>
<accession>O45924</accession>
<reference key="1">
    <citation type="journal article" date="1998" name="Science">
        <title>Genome sequence of the nematode C. elegans: a platform for investigating biology.</title>
        <authorList>
            <consortium name="The C. elegans sequencing consortium"/>
        </authorList>
    </citation>
    <scope>NUCLEOTIDE SEQUENCE [LARGE SCALE GENOMIC DNA]</scope>
    <source>
        <strain>Bristol N2</strain>
    </source>
</reference>
<reference key="2">
    <citation type="journal article" date="2004" name="PLoS Biol.">
        <title>Monomethyl branched-chain fatty acids play an essential role in Caenorhabditis elegans development.</title>
        <authorList>
            <person name="Kniazeva M."/>
            <person name="Crawford Q.T."/>
            <person name="Seiber M."/>
            <person name="Wang C.Y."/>
            <person name="Han M."/>
        </authorList>
    </citation>
    <scope>FUNCTION</scope>
    <scope>CATALYTIC ACTIVITY</scope>
    <scope>PATHWAY</scope>
</reference>
<name>ODBA_CAEEL</name>
<comment type="function">
    <text evidence="1 4">The branched-chain alpha-keto dehydrogenase complex catalyzes the overall conversion of alpha-keto acids to acyl-CoA and CO(2). It contains multiple copies of three enzymatic components: branched-chain alpha-keto acid decarboxylase (E1), lipoamide acyltransferase (E2) and lipoamide dehydrogenase (E3) (By similarity). Required for the production of the monomethyl branched-chain fatty acids (mmBCFAs) isopentadecanoate (C15iso) and isoheptadecanoate (C17iso) (PubMed:15340492).</text>
</comment>
<comment type="catalytic activity">
    <reaction evidence="4">
        <text>N(6)-[(R)-lipoyl]-L-lysyl-[protein] + 3-methyl-2-oxobutanoate + H(+) = N(6)-[(R)-S(8)-2-methylpropanoyldihydrolipoyl]-L-lysyl-[protein] + CO2</text>
        <dbReference type="Rhea" id="RHEA:13457"/>
        <dbReference type="Rhea" id="RHEA-COMP:10474"/>
        <dbReference type="Rhea" id="RHEA-COMP:10497"/>
        <dbReference type="ChEBI" id="CHEBI:11851"/>
        <dbReference type="ChEBI" id="CHEBI:15378"/>
        <dbReference type="ChEBI" id="CHEBI:16526"/>
        <dbReference type="ChEBI" id="CHEBI:83099"/>
        <dbReference type="ChEBI" id="CHEBI:83142"/>
        <dbReference type="EC" id="1.2.4.4"/>
    </reaction>
</comment>
<comment type="cofactor">
    <cofactor evidence="2">
        <name>thiamine diphosphate</name>
        <dbReference type="ChEBI" id="CHEBI:58937"/>
    </cofactor>
</comment>
<comment type="pathway">
    <text evidence="4">Lipid metabolism; fatty acid biosynthesis.</text>
</comment>
<comment type="subcellular location">
    <subcellularLocation>
        <location evidence="1">Mitochondrion matrix</location>
    </subcellularLocation>
</comment>
<comment type="similarity">
    <text evidence="5">Belongs to the BCKDHA family.</text>
</comment>
<proteinExistence type="evidence at protein level"/>